<organism>
    <name type="scientific">Haemophilus influenzae (strain ATCC 51907 / DSM 11121 / KW20 / Rd)</name>
    <dbReference type="NCBI Taxonomy" id="71421"/>
    <lineage>
        <taxon>Bacteria</taxon>
        <taxon>Pseudomonadati</taxon>
        <taxon>Pseudomonadota</taxon>
        <taxon>Gammaproteobacteria</taxon>
        <taxon>Pasteurellales</taxon>
        <taxon>Pasteurellaceae</taxon>
        <taxon>Haemophilus</taxon>
    </lineage>
</organism>
<protein>
    <recommendedName>
        <fullName>Putative acid--amine ligase HI_0929</fullName>
        <ecNumber>6.3.1.-</ecNumber>
    </recommendedName>
</protein>
<feature type="chain" id="PRO_0000169404" description="Putative acid--amine ligase HI_0929">
    <location>
        <begin position="1"/>
        <end position="393"/>
    </location>
</feature>
<feature type="binding site" evidence="1">
    <location>
        <begin position="103"/>
        <end position="105"/>
    </location>
    <ligand>
        <name>ATP</name>
        <dbReference type="ChEBI" id="CHEBI:30616"/>
    </ligand>
</feature>
<feature type="binding site" evidence="1">
    <location>
        <position position="105"/>
    </location>
    <ligand>
        <name>Mg(2+)</name>
        <dbReference type="ChEBI" id="CHEBI:18420"/>
        <label>1</label>
    </ligand>
</feature>
<feature type="binding site" evidence="1">
    <location>
        <position position="117"/>
    </location>
    <ligand>
        <name>Mg(2+)</name>
        <dbReference type="ChEBI" id="CHEBI:18420"/>
        <label>1</label>
    </ligand>
</feature>
<feature type="binding site" evidence="1">
    <location>
        <position position="119"/>
    </location>
    <ligand>
        <name>Mg(2+)</name>
        <dbReference type="ChEBI" id="CHEBI:18420"/>
        <label>2</label>
    </ligand>
</feature>
<feature type="binding site" evidence="1">
    <location>
        <position position="267"/>
    </location>
    <ligand>
        <name>ATP</name>
        <dbReference type="ChEBI" id="CHEBI:30616"/>
    </ligand>
</feature>
<feature type="binding site" evidence="1">
    <location>
        <position position="303"/>
    </location>
    <ligand>
        <name>ATP</name>
        <dbReference type="ChEBI" id="CHEBI:30616"/>
    </ligand>
</feature>
<feature type="binding site" evidence="1">
    <location>
        <position position="310"/>
    </location>
    <ligand>
        <name>ATP</name>
        <dbReference type="ChEBI" id="CHEBI:30616"/>
    </ligand>
</feature>
<feature type="binding site" evidence="1">
    <location>
        <position position="343"/>
    </location>
    <ligand>
        <name>ATP</name>
        <dbReference type="ChEBI" id="CHEBI:30616"/>
    </ligand>
</feature>
<feature type="binding site" evidence="1">
    <location>
        <begin position="378"/>
        <end position="380"/>
    </location>
    <ligand>
        <name>ATP</name>
        <dbReference type="ChEBI" id="CHEBI:30616"/>
    </ligand>
</feature>
<feature type="site" description="Transition state stabilizer" evidence="1">
    <location>
        <position position="103"/>
    </location>
</feature>
<evidence type="ECO:0000250" key="1"/>
<evidence type="ECO:0000305" key="2"/>
<sequence length="393" mass="45792">MKRVTGFPTRPDMVQQLLNVGFDYYNLPSSDGSHYWSDNVAYEFTLAEIDRIEDTTNELHSMCLDFAADEIKKGDYENYHFTELQKQLIETSWRNQEPYLYGRFDFGYDGNNLKMFEYNADTPTSLLEAAVVQWQWLEQIEGLKHRDQFNWIHEELIKHFQFLKQQSGKTDFHLSAMQDAGREDWGNVDYLADVAYNAGWNIHQLAVEDIGYNSETKKFVDLNDQPIEMLFKLYPLEWLSHAEFARHITTAETRFIEPAWKMLLSNKALLAKLWARYPNHPHLLPAYFTPFELPKDLSMWVKKPLLGREGANVFYYEKNNGVEFAAKGSEHSTFYGNSGYVYQQKFELPSFDGMYPIIGSWVVGDVACGMGLREDFTAVTGNDSHFIPHYFVP</sequence>
<comment type="function">
    <text evidence="1">May be a ligase forming an amide bond. Shows ATPase activity (By similarity).</text>
</comment>
<comment type="similarity">
    <text evidence="2">Belongs to the glutathionylspermidine synthase preATP-grasp family.</text>
</comment>
<proteinExistence type="inferred from homology"/>
<gene>
    <name type="ordered locus">HI_0929</name>
</gene>
<accession>P44940</accession>
<name>Y929_HAEIN</name>
<keyword id="KW-0067">ATP-binding</keyword>
<keyword id="KW-0436">Ligase</keyword>
<keyword id="KW-0460">Magnesium</keyword>
<keyword id="KW-0479">Metal-binding</keyword>
<keyword id="KW-0547">Nucleotide-binding</keyword>
<keyword id="KW-1185">Reference proteome</keyword>
<reference key="1">
    <citation type="journal article" date="1995" name="Science">
        <title>Whole-genome random sequencing and assembly of Haemophilus influenzae Rd.</title>
        <authorList>
            <person name="Fleischmann R.D."/>
            <person name="Adams M.D."/>
            <person name="White O."/>
            <person name="Clayton R.A."/>
            <person name="Kirkness E.F."/>
            <person name="Kerlavage A.R."/>
            <person name="Bult C.J."/>
            <person name="Tomb J.-F."/>
            <person name="Dougherty B.A."/>
            <person name="Merrick J.M."/>
            <person name="McKenney K."/>
            <person name="Sutton G.G."/>
            <person name="FitzHugh W."/>
            <person name="Fields C.A."/>
            <person name="Gocayne J.D."/>
            <person name="Scott J.D."/>
            <person name="Shirley R."/>
            <person name="Liu L.-I."/>
            <person name="Glodek A."/>
            <person name="Kelley J.M."/>
            <person name="Weidman J.F."/>
            <person name="Phillips C.A."/>
            <person name="Spriggs T."/>
            <person name="Hedblom E."/>
            <person name="Cotton M.D."/>
            <person name="Utterback T.R."/>
            <person name="Hanna M.C."/>
            <person name="Nguyen D.T."/>
            <person name="Saudek D.M."/>
            <person name="Brandon R.C."/>
            <person name="Fine L.D."/>
            <person name="Fritchman J.L."/>
            <person name="Fuhrmann J.L."/>
            <person name="Geoghagen N.S.M."/>
            <person name="Gnehm C.L."/>
            <person name="McDonald L.A."/>
            <person name="Small K.V."/>
            <person name="Fraser C.M."/>
            <person name="Smith H.O."/>
            <person name="Venter J.C."/>
        </authorList>
    </citation>
    <scope>NUCLEOTIDE SEQUENCE [LARGE SCALE GENOMIC DNA]</scope>
    <source>
        <strain>ATCC 51907 / DSM 11121 / KW20 / Rd</strain>
    </source>
</reference>
<dbReference type="EC" id="6.3.1.-"/>
<dbReference type="EMBL" id="L42023">
    <property type="protein sequence ID" value="AAC22589.1"/>
    <property type="molecule type" value="Genomic_DNA"/>
</dbReference>
<dbReference type="PIR" id="F64161">
    <property type="entry name" value="F64161"/>
</dbReference>
<dbReference type="RefSeq" id="NP_439089.1">
    <property type="nucleotide sequence ID" value="NC_000907.1"/>
</dbReference>
<dbReference type="SMR" id="P44940"/>
<dbReference type="STRING" id="71421.HI_0929"/>
<dbReference type="EnsemblBacteria" id="AAC22589">
    <property type="protein sequence ID" value="AAC22589"/>
    <property type="gene ID" value="HI_0929"/>
</dbReference>
<dbReference type="KEGG" id="hin:HI_0929"/>
<dbReference type="PATRIC" id="fig|71421.8.peg.970"/>
<dbReference type="eggNOG" id="COG0754">
    <property type="taxonomic scope" value="Bacteria"/>
</dbReference>
<dbReference type="HOGENOM" id="CLU_059175_0_0_6"/>
<dbReference type="OrthoDB" id="9765517at2"/>
<dbReference type="PhylomeDB" id="P44940"/>
<dbReference type="BioCyc" id="HINF71421:G1GJ1-969-MONOMER"/>
<dbReference type="Proteomes" id="UP000000579">
    <property type="component" value="Chromosome"/>
</dbReference>
<dbReference type="GO" id="GO:0005524">
    <property type="term" value="F:ATP binding"/>
    <property type="evidence" value="ECO:0007669"/>
    <property type="project" value="UniProtKB-KW"/>
</dbReference>
<dbReference type="GO" id="GO:0016874">
    <property type="term" value="F:ligase activity"/>
    <property type="evidence" value="ECO:0000318"/>
    <property type="project" value="GO_Central"/>
</dbReference>
<dbReference type="GO" id="GO:0046872">
    <property type="term" value="F:metal ion binding"/>
    <property type="evidence" value="ECO:0007669"/>
    <property type="project" value="UniProtKB-KW"/>
</dbReference>
<dbReference type="Gene3D" id="3.30.1490.330">
    <property type="match status" value="1"/>
</dbReference>
<dbReference type="InterPro" id="IPR005494">
    <property type="entry name" value="GSPS_pre-ATP-grasp-like_dom"/>
</dbReference>
<dbReference type="InterPro" id="IPR016185">
    <property type="entry name" value="PreATP-grasp_dom_sf"/>
</dbReference>
<dbReference type="Pfam" id="PF03738">
    <property type="entry name" value="GSP_synth"/>
    <property type="match status" value="1"/>
</dbReference>
<dbReference type="SUPFAM" id="SSF56059">
    <property type="entry name" value="Glutathione synthetase ATP-binding domain-like"/>
    <property type="match status" value="1"/>
</dbReference>
<dbReference type="SUPFAM" id="SSF52440">
    <property type="entry name" value="PreATP-grasp domain"/>
    <property type="match status" value="1"/>
</dbReference>